<evidence type="ECO:0000250" key="1"/>
<evidence type="ECO:0000250" key="2">
    <source>
        <dbReference type="UniProtKB" id="O75874"/>
    </source>
</evidence>
<evidence type="ECO:0000250" key="3">
    <source>
        <dbReference type="UniProtKB" id="O88844"/>
    </source>
</evidence>
<evidence type="ECO:0000250" key="4">
    <source>
        <dbReference type="UniProtKB" id="P41562"/>
    </source>
</evidence>
<evidence type="ECO:0000250" key="5">
    <source>
        <dbReference type="UniProtKB" id="Q9XSG3"/>
    </source>
</evidence>
<evidence type="ECO:0000305" key="6"/>
<sequence length="414" mass="46699">MSKKISGGSVVEMQGDEMTRIIWELIKEKLIFPYVELDLHSYDLGIENRDATNDQVTKDAAEAIKKYNVGVKCATITPDEKRVEEFKLKQMWKSPNGTIRNILGGTVFREAIICKNIPRLVSGWVKPIIIGRHAYGDQYRATDFVVPGPGKVEITYTPSDGTQKVTYLVHNFEEGGGVAMGMYNQDKSIEDFAHSSFQMALSKGWPLYLSTKNTILKKYDGRFKDIFQEIYDKQYKSQFEARKIWYEHRLIDDMVAQAMKSEGGFIWACKNYDGDVQSDSVAQGYGSLGMMTSVLVCPDGKTVEAEAAHGTVTRHYRMYQKGQETSTNPIASIFAWTRGLAHRAKLDNNKELAFFANALEEVSVETIEAGFMTKDLAACIKGLPNVQRSDYLNTFEFMDKLGENLKIKLAQAKL</sequence>
<gene>
    <name type="primary">IDH1</name>
</gene>
<protein>
    <recommendedName>
        <fullName>Isocitrate dehydrogenase [NADP] cytoplasmic</fullName>
        <shortName>IDH</shortName>
        <shortName>IDH1</shortName>
        <ecNumber evidence="3">1.1.1.42</ecNumber>
    </recommendedName>
    <alternativeName>
        <fullName>Cytosolic NADP-isocitrate dehydrogenase</fullName>
    </alternativeName>
    <alternativeName>
        <fullName>IDPc</fullName>
    </alternativeName>
    <alternativeName>
        <fullName>NADP(+)-specific ICDH</fullName>
    </alternativeName>
    <alternativeName>
        <fullName>Oxalosuccinate decarboxylase</fullName>
    </alternativeName>
</protein>
<dbReference type="EC" id="1.1.1.42" evidence="3"/>
<dbReference type="EMBL" id="CR857428">
    <property type="protein sequence ID" value="CAH89719.1"/>
    <property type="molecule type" value="mRNA"/>
</dbReference>
<dbReference type="EMBL" id="CR859464">
    <property type="protein sequence ID" value="CAH91635.1"/>
    <property type="molecule type" value="mRNA"/>
</dbReference>
<dbReference type="RefSeq" id="NP_001124781.1">
    <property type="nucleotide sequence ID" value="NM_001131309.1"/>
</dbReference>
<dbReference type="RefSeq" id="XP_009236322.1">
    <property type="nucleotide sequence ID" value="XM_009238047.1"/>
</dbReference>
<dbReference type="RefSeq" id="XP_009236323.1">
    <property type="nucleotide sequence ID" value="XM_009238048.1"/>
</dbReference>
<dbReference type="RefSeq" id="XP_009236324.1">
    <property type="nucleotide sequence ID" value="XM_009238049.1"/>
</dbReference>
<dbReference type="SMR" id="Q5R9C5"/>
<dbReference type="FunCoup" id="Q5R9C5">
    <property type="interactions" value="1893"/>
</dbReference>
<dbReference type="STRING" id="9601.ENSPPYP00000014668"/>
<dbReference type="Ensembl" id="ENSPPYT00000015262.3">
    <property type="protein sequence ID" value="ENSPPYP00000014668.2"/>
    <property type="gene ID" value="ENSPPYG00000013125.3"/>
</dbReference>
<dbReference type="GeneID" id="100171634"/>
<dbReference type="KEGG" id="pon:100171634"/>
<dbReference type="CTD" id="3417"/>
<dbReference type="eggNOG" id="KOG1526">
    <property type="taxonomic scope" value="Eukaryota"/>
</dbReference>
<dbReference type="GeneTree" id="ENSGT00390000012547"/>
<dbReference type="HOGENOM" id="CLU_023296_1_1_1"/>
<dbReference type="InParanoid" id="Q5R9C5"/>
<dbReference type="OMA" id="HGTVQRH"/>
<dbReference type="OrthoDB" id="248923at2759"/>
<dbReference type="TreeFam" id="TF300428"/>
<dbReference type="Proteomes" id="UP000001595">
    <property type="component" value="Chromosome 2B"/>
</dbReference>
<dbReference type="GO" id="GO:0005829">
    <property type="term" value="C:cytosol"/>
    <property type="evidence" value="ECO:0007669"/>
    <property type="project" value="UniProtKB-SubCell"/>
</dbReference>
<dbReference type="GO" id="GO:0005739">
    <property type="term" value="C:mitochondrion"/>
    <property type="evidence" value="ECO:0007669"/>
    <property type="project" value="Ensembl"/>
</dbReference>
<dbReference type="GO" id="GO:0005782">
    <property type="term" value="C:peroxisomal matrix"/>
    <property type="evidence" value="ECO:0007669"/>
    <property type="project" value="Ensembl"/>
</dbReference>
<dbReference type="GO" id="GO:0004450">
    <property type="term" value="F:isocitrate dehydrogenase (NADP+) activity"/>
    <property type="evidence" value="ECO:0000250"/>
    <property type="project" value="UniProtKB"/>
</dbReference>
<dbReference type="GO" id="GO:0000287">
    <property type="term" value="F:magnesium ion binding"/>
    <property type="evidence" value="ECO:0000250"/>
    <property type="project" value="UniProtKB"/>
</dbReference>
<dbReference type="GO" id="GO:0051287">
    <property type="term" value="F:NAD binding"/>
    <property type="evidence" value="ECO:0007669"/>
    <property type="project" value="InterPro"/>
</dbReference>
<dbReference type="GO" id="GO:0042803">
    <property type="term" value="F:protein homodimerization activity"/>
    <property type="evidence" value="ECO:0007669"/>
    <property type="project" value="Ensembl"/>
</dbReference>
<dbReference type="GO" id="GO:0006103">
    <property type="term" value="P:2-oxoglutarate metabolic process"/>
    <property type="evidence" value="ECO:0000250"/>
    <property type="project" value="UniProtKB"/>
</dbReference>
<dbReference type="GO" id="GO:0006749">
    <property type="term" value="P:glutathione metabolic process"/>
    <property type="evidence" value="ECO:0007669"/>
    <property type="project" value="Ensembl"/>
</dbReference>
<dbReference type="GO" id="GO:0006097">
    <property type="term" value="P:glyoxylate cycle"/>
    <property type="evidence" value="ECO:0007669"/>
    <property type="project" value="UniProtKB-KW"/>
</dbReference>
<dbReference type="GO" id="GO:0006102">
    <property type="term" value="P:isocitrate metabolic process"/>
    <property type="evidence" value="ECO:0000250"/>
    <property type="project" value="UniProtKB"/>
</dbReference>
<dbReference type="GO" id="GO:0006740">
    <property type="term" value="P:NADPH regeneration"/>
    <property type="evidence" value="ECO:0007669"/>
    <property type="project" value="Ensembl"/>
</dbReference>
<dbReference type="GO" id="GO:0071071">
    <property type="term" value="P:regulation of phospholipid biosynthetic process"/>
    <property type="evidence" value="ECO:0007669"/>
    <property type="project" value="Ensembl"/>
</dbReference>
<dbReference type="GO" id="GO:0060696">
    <property type="term" value="P:regulation of phospholipid catabolic process"/>
    <property type="evidence" value="ECO:0007669"/>
    <property type="project" value="Ensembl"/>
</dbReference>
<dbReference type="GO" id="GO:0006979">
    <property type="term" value="P:response to oxidative stress"/>
    <property type="evidence" value="ECO:0007669"/>
    <property type="project" value="Ensembl"/>
</dbReference>
<dbReference type="GO" id="GO:0006099">
    <property type="term" value="P:tricarboxylic acid cycle"/>
    <property type="evidence" value="ECO:0007669"/>
    <property type="project" value="UniProtKB-KW"/>
</dbReference>
<dbReference type="FunFam" id="3.40.718.10:FF:000002">
    <property type="entry name" value="Isocitrate dehydrogenase [NADP]"/>
    <property type="match status" value="1"/>
</dbReference>
<dbReference type="Gene3D" id="3.40.718.10">
    <property type="entry name" value="Isopropylmalate Dehydrogenase"/>
    <property type="match status" value="1"/>
</dbReference>
<dbReference type="InterPro" id="IPR019818">
    <property type="entry name" value="IsoCit/isopropylmalate_DH_CS"/>
</dbReference>
<dbReference type="InterPro" id="IPR004790">
    <property type="entry name" value="Isocitrate_DH_NADP"/>
</dbReference>
<dbReference type="InterPro" id="IPR024084">
    <property type="entry name" value="IsoPropMal-DH-like_dom"/>
</dbReference>
<dbReference type="NCBIfam" id="TIGR00127">
    <property type="entry name" value="nadp_idh_euk"/>
    <property type="match status" value="1"/>
</dbReference>
<dbReference type="NCBIfam" id="NF006156">
    <property type="entry name" value="PRK08299.1"/>
    <property type="match status" value="1"/>
</dbReference>
<dbReference type="PANTHER" id="PTHR11822:SF28">
    <property type="entry name" value="ISOCITRATE DEHYDROGENASE [NADP] CYTOPLASMIC"/>
    <property type="match status" value="1"/>
</dbReference>
<dbReference type="PANTHER" id="PTHR11822">
    <property type="entry name" value="NADP-SPECIFIC ISOCITRATE DEHYDROGENASE"/>
    <property type="match status" value="1"/>
</dbReference>
<dbReference type="Pfam" id="PF00180">
    <property type="entry name" value="Iso_dh"/>
    <property type="match status" value="1"/>
</dbReference>
<dbReference type="PIRSF" id="PIRSF000108">
    <property type="entry name" value="IDH_NADP"/>
    <property type="match status" value="1"/>
</dbReference>
<dbReference type="SMART" id="SM01329">
    <property type="entry name" value="Iso_dh"/>
    <property type="match status" value="1"/>
</dbReference>
<dbReference type="SUPFAM" id="SSF53659">
    <property type="entry name" value="Isocitrate/Isopropylmalate dehydrogenase-like"/>
    <property type="match status" value="1"/>
</dbReference>
<dbReference type="PROSITE" id="PS00470">
    <property type="entry name" value="IDH_IMDH"/>
    <property type="match status" value="1"/>
</dbReference>
<proteinExistence type="evidence at transcript level"/>
<reference key="1">
    <citation type="submission" date="2004-11" db="EMBL/GenBank/DDBJ databases">
        <authorList>
            <consortium name="The German cDNA consortium"/>
        </authorList>
    </citation>
    <scope>NUCLEOTIDE SEQUENCE [LARGE SCALE MRNA]</scope>
    <source>
        <tissue>Kidney</tissue>
    </source>
</reference>
<keyword id="KW-0007">Acetylation</keyword>
<keyword id="KW-0963">Cytoplasm</keyword>
<keyword id="KW-0329">Glyoxylate bypass</keyword>
<keyword id="KW-0460">Magnesium</keyword>
<keyword id="KW-0464">Manganese</keyword>
<keyword id="KW-0479">Metal-binding</keyword>
<keyword id="KW-0521">NADP</keyword>
<keyword id="KW-0560">Oxidoreductase</keyword>
<keyword id="KW-0597">Phosphoprotein</keyword>
<keyword id="KW-1185">Reference proteome</keyword>
<keyword id="KW-0816">Tricarboxylic acid cycle</keyword>
<comment type="function">
    <text evidence="2 5">Catalyzes the NADP(+)-dependent oxidative decarboxylation of isocitrate (D-threo-isocitrate) to 2-ketoglutarate (2-oxoglutarate), which is required by other enzymes such as the phytanoyl-CoA dioxygenase (By similarity). Plays a critical role in the generation of NADPH, an important cofactor in many biosynthesis pathways (By similarity). May act as a corneal epithelial crystallin and may be involved in maintaining corneal epithelial transparency (By similarity).</text>
</comment>
<comment type="catalytic activity">
    <reaction evidence="3">
        <text>D-threo-isocitrate + NADP(+) = 2-oxoglutarate + CO2 + NADPH</text>
        <dbReference type="Rhea" id="RHEA:19629"/>
        <dbReference type="ChEBI" id="CHEBI:15562"/>
        <dbReference type="ChEBI" id="CHEBI:16526"/>
        <dbReference type="ChEBI" id="CHEBI:16810"/>
        <dbReference type="ChEBI" id="CHEBI:57783"/>
        <dbReference type="ChEBI" id="CHEBI:58349"/>
        <dbReference type="EC" id="1.1.1.42"/>
    </reaction>
    <physiologicalReaction direction="left-to-right" evidence="3">
        <dbReference type="Rhea" id="RHEA:19630"/>
    </physiologicalReaction>
</comment>
<comment type="cofactor">
    <cofactor evidence="3">
        <name>Mg(2+)</name>
        <dbReference type="ChEBI" id="CHEBI:18420"/>
    </cofactor>
    <cofactor evidence="3">
        <name>Mn(2+)</name>
        <dbReference type="ChEBI" id="CHEBI:29035"/>
    </cofactor>
    <text evidence="3">Binds 1 Mg(2+) or Mn(2+) ion per subunit.</text>
</comment>
<comment type="subunit">
    <text evidence="3">Homodimer.</text>
</comment>
<comment type="subcellular location">
    <subcellularLocation>
        <location evidence="4">Cytoplasm</location>
        <location evidence="4">Cytosol</location>
    </subcellularLocation>
</comment>
<comment type="PTM">
    <text evidence="1">Acetylation at Lys-374 dramatically reduces catalytic activity.</text>
</comment>
<comment type="similarity">
    <text evidence="6">Belongs to the isocitrate and isopropylmalate dehydrogenases family.</text>
</comment>
<feature type="initiator methionine" description="Removed" evidence="2">
    <location>
        <position position="1"/>
    </location>
</feature>
<feature type="chain" id="PRO_0000236187" description="Isocitrate dehydrogenase [NADP] cytoplasmic">
    <location>
        <begin position="2"/>
        <end position="414"/>
    </location>
</feature>
<feature type="binding site" evidence="2">
    <location>
        <begin position="75"/>
        <end position="77"/>
    </location>
    <ligand>
        <name>NADP(+)</name>
        <dbReference type="ChEBI" id="CHEBI:58349"/>
    </ligand>
</feature>
<feature type="binding site" description="in other chain" evidence="2">
    <location>
        <position position="77"/>
    </location>
    <ligand>
        <name>substrate</name>
        <note>ligand shared between two neighboring subunits</note>
    </ligand>
</feature>
<feature type="binding site" evidence="2">
    <location>
        <position position="82"/>
    </location>
    <ligand>
        <name>NADP(+)</name>
        <dbReference type="ChEBI" id="CHEBI:58349"/>
    </ligand>
</feature>
<feature type="binding site" description="in other chain" evidence="2">
    <location>
        <begin position="94"/>
        <end position="100"/>
    </location>
    <ligand>
        <name>substrate</name>
        <note>ligand shared between two neighboring subunits</note>
    </ligand>
</feature>
<feature type="binding site" description="in other chain" evidence="2">
    <location>
        <position position="109"/>
    </location>
    <ligand>
        <name>substrate</name>
        <note>ligand shared between two neighboring subunits</note>
    </ligand>
</feature>
<feature type="binding site" description="in other chain" evidence="2">
    <location>
        <position position="132"/>
    </location>
    <ligand>
        <name>substrate</name>
        <note>ligand shared between two neighboring subunits</note>
    </ligand>
</feature>
<feature type="binding site" evidence="3">
    <location>
        <position position="212"/>
    </location>
    <ligand>
        <name>substrate</name>
        <note>ligand shared between two neighboring subunits</note>
    </ligand>
</feature>
<feature type="binding site" evidence="2">
    <location>
        <position position="252"/>
    </location>
    <ligand>
        <name>Mn(2+)</name>
        <dbReference type="ChEBI" id="CHEBI:29035"/>
        <note>ligand shared between two neighboring subunits</note>
    </ligand>
</feature>
<feature type="binding site" evidence="2">
    <location>
        <position position="260"/>
    </location>
    <ligand>
        <name>NADP(+)</name>
        <dbReference type="ChEBI" id="CHEBI:58349"/>
    </ligand>
</feature>
<feature type="binding site" description="in other chain" evidence="2">
    <location>
        <position position="275"/>
    </location>
    <ligand>
        <name>Mn(2+)</name>
        <dbReference type="ChEBI" id="CHEBI:29035"/>
        <note>ligand shared between two neighboring subunits</note>
    </ligand>
</feature>
<feature type="binding site" description="in other chain" evidence="2">
    <location>
        <position position="279"/>
    </location>
    <ligand>
        <name>Mn(2+)</name>
        <dbReference type="ChEBI" id="CHEBI:29035"/>
        <note>ligand shared between two neighboring subunits</note>
    </ligand>
</feature>
<feature type="binding site" evidence="2">
    <location>
        <begin position="310"/>
        <end position="315"/>
    </location>
    <ligand>
        <name>NADP(+)</name>
        <dbReference type="ChEBI" id="CHEBI:58349"/>
    </ligand>
</feature>
<feature type="binding site" evidence="2">
    <location>
        <position position="328"/>
    </location>
    <ligand>
        <name>NADP(+)</name>
        <dbReference type="ChEBI" id="CHEBI:58349"/>
    </ligand>
</feature>
<feature type="site" description="Critical for catalysis" evidence="1">
    <location>
        <position position="139"/>
    </location>
</feature>
<feature type="site" description="Critical for catalysis" evidence="1">
    <location>
        <position position="212"/>
    </location>
</feature>
<feature type="modified residue" description="N-acetylserine" evidence="2">
    <location>
        <position position="2"/>
    </location>
</feature>
<feature type="modified residue" description="Phosphotyrosine" evidence="2">
    <location>
        <position position="42"/>
    </location>
</feature>
<feature type="modified residue" description="N6-acetyllysine" evidence="3">
    <location>
        <position position="81"/>
    </location>
</feature>
<feature type="modified residue" description="N6-succinyllysine" evidence="3">
    <location>
        <position position="126"/>
    </location>
</feature>
<feature type="modified residue" description="N6-acetyllysine" evidence="3">
    <location>
        <position position="224"/>
    </location>
</feature>
<feature type="modified residue" description="N6-acetyllysine" evidence="3">
    <location>
        <position position="233"/>
    </location>
</feature>
<feature type="modified residue" description="N6-acetyllysine" evidence="3">
    <location>
        <position position="243"/>
    </location>
</feature>
<feature type="modified residue" description="N6-acetyllysine" evidence="2">
    <location>
        <position position="321"/>
    </location>
</feature>
<feature type="modified residue" description="Phosphoserine" evidence="3">
    <location>
        <position position="389"/>
    </location>
</feature>
<feature type="modified residue" description="N6-succinyllysine" evidence="3">
    <location>
        <position position="400"/>
    </location>
</feature>
<feature type="sequence conflict" description="In Ref. 1; CAH89719." evidence="6" ref="1">
    <original>L</original>
    <variation>Q</variation>
    <location>
        <position position="25"/>
    </location>
</feature>
<feature type="sequence conflict" description="In Ref. 1; CAH91635." evidence="6" ref="1">
    <original>I</original>
    <variation>T</variation>
    <location>
        <position position="226"/>
    </location>
</feature>
<feature type="sequence conflict" description="In Ref. 1; CAH91635." evidence="6" ref="1">
    <original>A</original>
    <variation>V</variation>
    <location>
        <position position="331"/>
    </location>
</feature>
<feature type="sequence conflict" description="In Ref. 1; CAH89719." evidence="6" ref="1">
    <original>Q</original>
    <variation>L</variation>
    <location>
        <position position="411"/>
    </location>
</feature>
<organism>
    <name type="scientific">Pongo abelii</name>
    <name type="common">Sumatran orangutan</name>
    <name type="synonym">Pongo pygmaeus abelii</name>
    <dbReference type="NCBI Taxonomy" id="9601"/>
    <lineage>
        <taxon>Eukaryota</taxon>
        <taxon>Metazoa</taxon>
        <taxon>Chordata</taxon>
        <taxon>Craniata</taxon>
        <taxon>Vertebrata</taxon>
        <taxon>Euteleostomi</taxon>
        <taxon>Mammalia</taxon>
        <taxon>Eutheria</taxon>
        <taxon>Euarchontoglires</taxon>
        <taxon>Primates</taxon>
        <taxon>Haplorrhini</taxon>
        <taxon>Catarrhini</taxon>
        <taxon>Hominidae</taxon>
        <taxon>Pongo</taxon>
    </lineage>
</organism>
<name>IDHC_PONAB</name>
<accession>Q5R9C5</accession>
<accession>Q5RET8</accession>